<gene>
    <name evidence="1" type="primary">psbN</name>
    <name type="ordered locus">gsl3001</name>
</gene>
<reference key="1">
    <citation type="journal article" date="2003" name="DNA Res.">
        <title>Complete genome structure of Gloeobacter violaceus PCC 7421, a cyanobacterium that lacks thylakoids.</title>
        <authorList>
            <person name="Nakamura Y."/>
            <person name="Kaneko T."/>
            <person name="Sato S."/>
            <person name="Mimuro M."/>
            <person name="Miyashita H."/>
            <person name="Tsuchiya T."/>
            <person name="Sasamoto S."/>
            <person name="Watanabe A."/>
            <person name="Kawashima K."/>
            <person name="Kishida Y."/>
            <person name="Kiyokawa C."/>
            <person name="Kohara M."/>
            <person name="Matsumoto M."/>
            <person name="Matsuno A."/>
            <person name="Nakazaki N."/>
            <person name="Shimpo S."/>
            <person name="Takeuchi C."/>
            <person name="Yamada M."/>
            <person name="Tabata S."/>
        </authorList>
    </citation>
    <scope>NUCLEOTIDE SEQUENCE [LARGE SCALE GENOMIC DNA]</scope>
    <source>
        <strain>ATCC 29082 / PCC 7421</strain>
    </source>
</reference>
<evidence type="ECO:0000255" key="1">
    <source>
        <dbReference type="HAMAP-Rule" id="MF_00293"/>
    </source>
</evidence>
<sequence length="43" mass="4638">MTVAQVFVVGILVALVLITAFAVYTAFGPPSKKLADPFEMHED</sequence>
<name>PSBN_GLOVI</name>
<protein>
    <recommendedName>
        <fullName evidence="1">Protein PsbN</fullName>
    </recommendedName>
</protein>
<accession>Q7NCH8</accession>
<dbReference type="EMBL" id="BA000045">
    <property type="protein sequence ID" value="BAC90942.1"/>
    <property type="molecule type" value="Genomic_DNA"/>
</dbReference>
<dbReference type="RefSeq" id="NP_925947.1">
    <property type="nucleotide sequence ID" value="NC_005125.1"/>
</dbReference>
<dbReference type="RefSeq" id="WP_011142994.1">
    <property type="nucleotide sequence ID" value="NC_005125.1"/>
</dbReference>
<dbReference type="SMR" id="Q7NCH8"/>
<dbReference type="STRING" id="251221.gene:10760505"/>
<dbReference type="EnsemblBacteria" id="BAC90942">
    <property type="protein sequence ID" value="BAC90942"/>
    <property type="gene ID" value="BAC90942"/>
</dbReference>
<dbReference type="KEGG" id="gvi:gsl3001"/>
<dbReference type="PATRIC" id="fig|251221.4.peg.3028"/>
<dbReference type="HOGENOM" id="CLU_205504_0_0_3"/>
<dbReference type="InParanoid" id="Q7NCH8"/>
<dbReference type="OrthoDB" id="532561at2"/>
<dbReference type="PhylomeDB" id="Q7NCH8"/>
<dbReference type="Proteomes" id="UP000000557">
    <property type="component" value="Chromosome"/>
</dbReference>
<dbReference type="GO" id="GO:0005886">
    <property type="term" value="C:plasma membrane"/>
    <property type="evidence" value="ECO:0007669"/>
    <property type="project" value="UniProtKB-SubCell"/>
</dbReference>
<dbReference type="GO" id="GO:0015979">
    <property type="term" value="P:photosynthesis"/>
    <property type="evidence" value="ECO:0007669"/>
    <property type="project" value="InterPro"/>
</dbReference>
<dbReference type="HAMAP" id="MF_00293">
    <property type="entry name" value="PSII_PsbN"/>
    <property type="match status" value="1"/>
</dbReference>
<dbReference type="InterPro" id="IPR003398">
    <property type="entry name" value="PSII_PsbN"/>
</dbReference>
<dbReference type="NCBIfam" id="NF009650">
    <property type="entry name" value="PRK13183.1"/>
    <property type="match status" value="1"/>
</dbReference>
<dbReference type="PANTHER" id="PTHR35326">
    <property type="entry name" value="PROTEIN PSBN"/>
    <property type="match status" value="1"/>
</dbReference>
<dbReference type="PANTHER" id="PTHR35326:SF3">
    <property type="entry name" value="PROTEIN PSBN"/>
    <property type="match status" value="1"/>
</dbReference>
<dbReference type="Pfam" id="PF02468">
    <property type="entry name" value="PsbN"/>
    <property type="match status" value="1"/>
</dbReference>
<comment type="function">
    <text evidence="1">May play a role in photosystem I and II biogenesis.</text>
</comment>
<comment type="subcellular location">
    <subcellularLocation>
        <location evidence="1">Cell inner membrane</location>
        <topology evidence="1">Single-pass membrane protein</topology>
    </subcellularLocation>
</comment>
<comment type="similarity">
    <text evidence="1">Belongs to the PsbN family.</text>
</comment>
<comment type="caution">
    <text evidence="1">Originally thought to be a component of PSII; based on experiments in Synechocystis, N.tabacum and barley, and its absence from PSII in T.elongatus and T.vulcanus, this is probably not true.</text>
</comment>
<feature type="chain" id="PRO_0000232783" description="Protein PsbN">
    <location>
        <begin position="1"/>
        <end position="43"/>
    </location>
</feature>
<feature type="transmembrane region" description="Helical" evidence="1">
    <location>
        <begin position="7"/>
        <end position="27"/>
    </location>
</feature>
<proteinExistence type="inferred from homology"/>
<organism>
    <name type="scientific">Gloeobacter violaceus (strain ATCC 29082 / PCC 7421)</name>
    <dbReference type="NCBI Taxonomy" id="251221"/>
    <lineage>
        <taxon>Bacteria</taxon>
        <taxon>Bacillati</taxon>
        <taxon>Cyanobacteriota</taxon>
        <taxon>Cyanophyceae</taxon>
        <taxon>Gloeobacterales</taxon>
        <taxon>Gloeobacteraceae</taxon>
        <taxon>Gloeobacter</taxon>
    </lineage>
</organism>
<keyword id="KW-0997">Cell inner membrane</keyword>
<keyword id="KW-1003">Cell membrane</keyword>
<keyword id="KW-0472">Membrane</keyword>
<keyword id="KW-1185">Reference proteome</keyword>
<keyword id="KW-0812">Transmembrane</keyword>
<keyword id="KW-1133">Transmembrane helix</keyword>